<keyword id="KW-0025">Alternative splicing</keyword>
<keyword id="KW-1048">Host nucleus</keyword>
<keyword id="KW-0945">Host-virus interaction</keyword>
<keyword id="KW-0813">Transport</keyword>
<keyword id="KW-0946">Virion</keyword>
<reference key="1">
    <citation type="journal article" date="2004" name="Nature">
        <title>Genesis of a highly pathogenic and potentially pandemic H5N1 influenza virus in eastern Asia.</title>
        <authorList>
            <person name="Li K.S."/>
            <person name="Guan Y."/>
            <person name="Wang J."/>
            <person name="Smith G.J.D."/>
            <person name="Xu K.M."/>
            <person name="Duan L."/>
            <person name="Rahardjo A.P."/>
            <person name="Puthavathana P."/>
            <person name="Buranathai C."/>
            <person name="Nguyen T.D."/>
            <person name="Estoepangestie A.T.S."/>
            <person name="Chaisingh A."/>
            <person name="Auewarakul P."/>
            <person name="Long H.T."/>
            <person name="Hanh N.T.H."/>
            <person name="Webby R.J."/>
            <person name="Poon L.L.M."/>
            <person name="Chen H."/>
            <person name="Shortridge K.F."/>
            <person name="Yuen K.Y."/>
            <person name="Webster R.G."/>
            <person name="Peiris J.S.M."/>
        </authorList>
    </citation>
    <scope>NUCLEOTIDE SEQUENCE [GENOMIC RNA]</scope>
</reference>
<organismHost>
    <name type="scientific">Aves</name>
    <dbReference type="NCBI Taxonomy" id="8782"/>
</organismHost>
<organismHost>
    <name type="scientific">Felis catus</name>
    <name type="common">Cat</name>
    <name type="synonym">Felis silvestris catus</name>
    <dbReference type="NCBI Taxonomy" id="9685"/>
</organismHost>
<organismHost>
    <name type="scientific">Homo sapiens</name>
    <name type="common">Human</name>
    <dbReference type="NCBI Taxonomy" id="9606"/>
</organismHost>
<organismHost>
    <name type="scientific">Panthera pardus</name>
    <name type="common">Leopard</name>
    <name type="synonym">Felis pardus</name>
    <dbReference type="NCBI Taxonomy" id="9691"/>
</organismHost>
<organismHost>
    <name type="scientific">Panthera tigris</name>
    <name type="common">Tiger</name>
    <dbReference type="NCBI Taxonomy" id="9694"/>
</organismHost>
<organismHost>
    <name type="scientific">Sus scrofa</name>
    <name type="common">Pig</name>
    <dbReference type="NCBI Taxonomy" id="9823"/>
</organismHost>
<accession>Q6DP67</accession>
<comment type="function">
    <text evidence="1">Mediates the nuclear export of encapsidated genomic RNAs (ribonucleoproteins, RNPs). Acts as an adapter between viral RNPs complexes and the nuclear export machinery of the cell. Possesses no intrinsic RNA-binding activity, but includes a C-terminal M1-binding domain. This domain is believed to allow recognition of RNPs bound to the protein M1. Since protein M1 is not available in large quantities before late stages of infection, such an indirect recognition mechanism probably ensures that genomic RNPs are not exported from the host nucleus until sufficient quantities of viral mRNA and progeny genomic RNA have been synthesized. Furthermore, the RNPs enter the host cytoplasm only when associated with the M1 protein that is necessary to guide them to the plasma membrane. May down-regulate viral RNA synthesis when overproduced.</text>
</comment>
<comment type="subunit">
    <text evidence="1">Interacts with protein M1. May interact with host nucleoporin RAB/HRB and exportin XPO1/CRM1.</text>
</comment>
<comment type="subcellular location">
    <subcellularLocation>
        <location evidence="1">Virion</location>
    </subcellularLocation>
    <subcellularLocation>
        <location evidence="1">Host nucleus</location>
    </subcellularLocation>
</comment>
<comment type="alternative products">
    <event type="alternative splicing"/>
    <isoform>
        <id>Q6DP67-1</id>
        <name>NEP</name>
        <name>NS2</name>
        <sequence type="displayed"/>
    </isoform>
    <isoform>
        <id>Q6DP66-1</id>
        <name>NS1</name>
        <sequence type="external"/>
    </isoform>
</comment>
<comment type="miscellaneous">
    <text>Average number present in a viral particle is estimated to be 130-200 molecules.</text>
</comment>
<comment type="similarity">
    <text evidence="1">Belongs to the influenza viruses NEP family.</text>
</comment>
<protein>
    <recommendedName>
        <fullName evidence="1">Nuclear export protein</fullName>
        <shortName evidence="1">NEP</shortName>
    </recommendedName>
    <alternativeName>
        <fullName evidence="1">Non-structural protein 2</fullName>
        <shortName evidence="1">NS2</shortName>
    </alternativeName>
</protein>
<feature type="chain" id="PRO_0000311734" description="Nuclear export protein">
    <location>
        <begin position="1"/>
        <end position="121"/>
    </location>
</feature>
<feature type="short sequence motif" description="Nuclear export signal" evidence="1">
    <location>
        <begin position="12"/>
        <end position="21"/>
    </location>
</feature>
<feature type="short sequence motif" description="Nuclear export signal" evidence="1">
    <location>
        <begin position="85"/>
        <end position="94"/>
    </location>
</feature>
<organism>
    <name type="scientific">Influenza A virus (strain A/Chicken/Hong Kong/37.4/2002 H5N1 genotype X2)</name>
    <dbReference type="NCBI Taxonomy" id="284172"/>
    <lineage>
        <taxon>Viruses</taxon>
        <taxon>Riboviria</taxon>
        <taxon>Orthornavirae</taxon>
        <taxon>Negarnaviricota</taxon>
        <taxon>Polyploviricotina</taxon>
        <taxon>Insthoviricetes</taxon>
        <taxon>Articulavirales</taxon>
        <taxon>Orthomyxoviridae</taxon>
        <taxon>Alphainfluenzavirus</taxon>
        <taxon>Alphainfluenzavirus influenzae</taxon>
        <taxon>Influenza A virus</taxon>
    </lineage>
</organism>
<name>NEP_I02A3</name>
<proteinExistence type="inferred from homology"/>
<evidence type="ECO:0000255" key="1">
    <source>
        <dbReference type="HAMAP-Rule" id="MF_04067"/>
    </source>
</evidence>
<dbReference type="EMBL" id="AY651566">
    <property type="protein sequence ID" value="AAT73420.1"/>
    <property type="molecule type" value="Genomic_RNA"/>
</dbReference>
<dbReference type="SMR" id="Q6DP67"/>
<dbReference type="GO" id="GO:0042025">
    <property type="term" value="C:host cell nucleus"/>
    <property type="evidence" value="ECO:0007669"/>
    <property type="project" value="UniProtKB-SubCell"/>
</dbReference>
<dbReference type="GO" id="GO:0044423">
    <property type="term" value="C:virion component"/>
    <property type="evidence" value="ECO:0007669"/>
    <property type="project" value="UniProtKB-UniRule"/>
</dbReference>
<dbReference type="GO" id="GO:0039675">
    <property type="term" value="P:exit of virus from host cell nucleus through nuclear pore"/>
    <property type="evidence" value="ECO:0007669"/>
    <property type="project" value="UniProtKB-UniRule"/>
</dbReference>
<dbReference type="Gene3D" id="1.10.287.230">
    <property type="match status" value="1"/>
</dbReference>
<dbReference type="Gene3D" id="1.10.287.10">
    <property type="entry name" value="S15/NS1, RNA-binding"/>
    <property type="match status" value="1"/>
</dbReference>
<dbReference type="HAMAP" id="MF_04067">
    <property type="entry name" value="INFV_NEP"/>
    <property type="match status" value="1"/>
</dbReference>
<dbReference type="InterPro" id="IPR000968">
    <property type="entry name" value="Flu_NS2"/>
</dbReference>
<dbReference type="Pfam" id="PF00601">
    <property type="entry name" value="Flu_NS2"/>
    <property type="match status" value="1"/>
</dbReference>
<dbReference type="SUPFAM" id="SSF101156">
    <property type="entry name" value="Nonstructural protein ns2, Nep, M1-binding domain"/>
    <property type="match status" value="1"/>
</dbReference>
<sequence>MDSNTVSSFQDILMRMSKMQLGSSSEDLNGMITQFESLKLYRDSLGEAVMRVGDLHSLQSRNGKWREQLSQKFEEIRWLIEEVRHRLKITENSFEQITFMQALQLLLEVEQEIRTFSFQLI</sequence>
<gene>
    <name evidence="1" type="primary">NS</name>
</gene>